<accession>O84591</accession>
<gene>
    <name evidence="1" type="primary">eno</name>
    <name type="ordered locus">CT_587</name>
</gene>
<protein>
    <recommendedName>
        <fullName evidence="1">Enolase</fullName>
        <ecNumber evidence="1">4.2.1.11</ecNumber>
    </recommendedName>
    <alternativeName>
        <fullName evidence="1">2-phospho-D-glycerate hydro-lyase</fullName>
    </alternativeName>
    <alternativeName>
        <fullName evidence="1">2-phosphoglycerate dehydratase</fullName>
    </alternativeName>
</protein>
<comment type="function">
    <text evidence="1">Catalyzes the reversible conversion of 2-phosphoglycerate (2-PG) into phosphoenolpyruvate (PEP). It is essential for the degradation of carbohydrates via glycolysis.</text>
</comment>
<comment type="catalytic activity">
    <reaction evidence="1">
        <text>(2R)-2-phosphoglycerate = phosphoenolpyruvate + H2O</text>
        <dbReference type="Rhea" id="RHEA:10164"/>
        <dbReference type="ChEBI" id="CHEBI:15377"/>
        <dbReference type="ChEBI" id="CHEBI:58289"/>
        <dbReference type="ChEBI" id="CHEBI:58702"/>
        <dbReference type="EC" id="4.2.1.11"/>
    </reaction>
</comment>
<comment type="cofactor">
    <cofactor evidence="1">
        <name>Mg(2+)</name>
        <dbReference type="ChEBI" id="CHEBI:18420"/>
    </cofactor>
    <text evidence="1">Binds a second Mg(2+) ion via substrate during catalysis.</text>
</comment>
<comment type="pathway">
    <text evidence="1">Carbohydrate degradation; glycolysis; pyruvate from D-glyceraldehyde 3-phosphate: step 4/5.</text>
</comment>
<comment type="subcellular location">
    <subcellularLocation>
        <location evidence="1">Cytoplasm</location>
    </subcellularLocation>
    <subcellularLocation>
        <location evidence="1">Secreted</location>
    </subcellularLocation>
    <subcellularLocation>
        <location evidence="1">Cell surface</location>
    </subcellularLocation>
    <text evidence="1">Fractions of enolase are present in both the cytoplasm and on the cell surface.</text>
</comment>
<comment type="similarity">
    <text evidence="1">Belongs to the enolase family.</text>
</comment>
<keyword id="KW-0002">3D-structure</keyword>
<keyword id="KW-0963">Cytoplasm</keyword>
<keyword id="KW-0324">Glycolysis</keyword>
<keyword id="KW-0456">Lyase</keyword>
<keyword id="KW-0460">Magnesium</keyword>
<keyword id="KW-0479">Metal-binding</keyword>
<keyword id="KW-1185">Reference proteome</keyword>
<keyword id="KW-0964">Secreted</keyword>
<proteinExistence type="evidence at protein level"/>
<dbReference type="EC" id="4.2.1.11" evidence="1"/>
<dbReference type="EMBL" id="AE001273">
    <property type="protein sequence ID" value="AAC68189.1"/>
    <property type="molecule type" value="Genomic_DNA"/>
</dbReference>
<dbReference type="PIR" id="D71496">
    <property type="entry name" value="D71496"/>
</dbReference>
<dbReference type="RefSeq" id="NP_220102.1">
    <property type="nucleotide sequence ID" value="NC_000117.1"/>
</dbReference>
<dbReference type="RefSeq" id="WP_009871953.1">
    <property type="nucleotide sequence ID" value="NC_000117.1"/>
</dbReference>
<dbReference type="PDB" id="8W21">
    <property type="method" value="X-ray"/>
    <property type="resolution" value="2.25 A"/>
    <property type="chains" value="A/B/C/D/E/F/G/H=1-424"/>
</dbReference>
<dbReference type="PDBsum" id="8W21"/>
<dbReference type="SMR" id="O84591"/>
<dbReference type="FunCoup" id="O84591">
    <property type="interactions" value="181"/>
</dbReference>
<dbReference type="STRING" id="272561.CT_587"/>
<dbReference type="EnsemblBacteria" id="AAC68189">
    <property type="protein sequence ID" value="AAC68189"/>
    <property type="gene ID" value="CT_587"/>
</dbReference>
<dbReference type="GeneID" id="884364"/>
<dbReference type="KEGG" id="ctr:CT_587"/>
<dbReference type="PATRIC" id="fig|272561.5.peg.639"/>
<dbReference type="HOGENOM" id="CLU_031223_2_1_0"/>
<dbReference type="InParanoid" id="O84591"/>
<dbReference type="OrthoDB" id="9804716at2"/>
<dbReference type="UniPathway" id="UPA00109">
    <property type="reaction ID" value="UER00187"/>
</dbReference>
<dbReference type="Proteomes" id="UP000000431">
    <property type="component" value="Chromosome"/>
</dbReference>
<dbReference type="GO" id="GO:0009986">
    <property type="term" value="C:cell surface"/>
    <property type="evidence" value="ECO:0007669"/>
    <property type="project" value="UniProtKB-SubCell"/>
</dbReference>
<dbReference type="GO" id="GO:0005576">
    <property type="term" value="C:extracellular region"/>
    <property type="evidence" value="ECO:0007669"/>
    <property type="project" value="UniProtKB-SubCell"/>
</dbReference>
<dbReference type="GO" id="GO:0000015">
    <property type="term" value="C:phosphopyruvate hydratase complex"/>
    <property type="evidence" value="ECO:0000318"/>
    <property type="project" value="GO_Central"/>
</dbReference>
<dbReference type="GO" id="GO:0000287">
    <property type="term" value="F:magnesium ion binding"/>
    <property type="evidence" value="ECO:0007669"/>
    <property type="project" value="UniProtKB-UniRule"/>
</dbReference>
<dbReference type="GO" id="GO:0004634">
    <property type="term" value="F:phosphopyruvate hydratase activity"/>
    <property type="evidence" value="ECO:0000318"/>
    <property type="project" value="GO_Central"/>
</dbReference>
<dbReference type="GO" id="GO:0006096">
    <property type="term" value="P:glycolytic process"/>
    <property type="evidence" value="ECO:0000318"/>
    <property type="project" value="GO_Central"/>
</dbReference>
<dbReference type="CDD" id="cd03313">
    <property type="entry name" value="enolase"/>
    <property type="match status" value="1"/>
</dbReference>
<dbReference type="Gene3D" id="3.20.20.120">
    <property type="entry name" value="Enolase-like C-terminal domain"/>
    <property type="match status" value="1"/>
</dbReference>
<dbReference type="Gene3D" id="3.30.390.10">
    <property type="entry name" value="Enolase-like, N-terminal domain"/>
    <property type="match status" value="1"/>
</dbReference>
<dbReference type="HAMAP" id="MF_00318">
    <property type="entry name" value="Enolase"/>
    <property type="match status" value="1"/>
</dbReference>
<dbReference type="InterPro" id="IPR000941">
    <property type="entry name" value="Enolase"/>
</dbReference>
<dbReference type="InterPro" id="IPR036849">
    <property type="entry name" value="Enolase-like_C_sf"/>
</dbReference>
<dbReference type="InterPro" id="IPR029017">
    <property type="entry name" value="Enolase-like_N"/>
</dbReference>
<dbReference type="InterPro" id="IPR020810">
    <property type="entry name" value="Enolase_C"/>
</dbReference>
<dbReference type="InterPro" id="IPR020809">
    <property type="entry name" value="Enolase_CS"/>
</dbReference>
<dbReference type="InterPro" id="IPR020811">
    <property type="entry name" value="Enolase_N"/>
</dbReference>
<dbReference type="NCBIfam" id="TIGR01060">
    <property type="entry name" value="eno"/>
    <property type="match status" value="1"/>
</dbReference>
<dbReference type="PANTHER" id="PTHR11902">
    <property type="entry name" value="ENOLASE"/>
    <property type="match status" value="1"/>
</dbReference>
<dbReference type="PANTHER" id="PTHR11902:SF1">
    <property type="entry name" value="ENOLASE"/>
    <property type="match status" value="1"/>
</dbReference>
<dbReference type="Pfam" id="PF00113">
    <property type="entry name" value="Enolase_C"/>
    <property type="match status" value="1"/>
</dbReference>
<dbReference type="Pfam" id="PF03952">
    <property type="entry name" value="Enolase_N"/>
    <property type="match status" value="1"/>
</dbReference>
<dbReference type="PIRSF" id="PIRSF001400">
    <property type="entry name" value="Enolase"/>
    <property type="match status" value="1"/>
</dbReference>
<dbReference type="PRINTS" id="PR00148">
    <property type="entry name" value="ENOLASE"/>
</dbReference>
<dbReference type="SFLD" id="SFLDF00002">
    <property type="entry name" value="enolase"/>
    <property type="match status" value="1"/>
</dbReference>
<dbReference type="SFLD" id="SFLDG00178">
    <property type="entry name" value="enolase"/>
    <property type="match status" value="1"/>
</dbReference>
<dbReference type="SMART" id="SM01192">
    <property type="entry name" value="Enolase_C"/>
    <property type="match status" value="1"/>
</dbReference>
<dbReference type="SMART" id="SM01193">
    <property type="entry name" value="Enolase_N"/>
    <property type="match status" value="1"/>
</dbReference>
<dbReference type="SUPFAM" id="SSF51604">
    <property type="entry name" value="Enolase C-terminal domain-like"/>
    <property type="match status" value="1"/>
</dbReference>
<dbReference type="SUPFAM" id="SSF54826">
    <property type="entry name" value="Enolase N-terminal domain-like"/>
    <property type="match status" value="1"/>
</dbReference>
<dbReference type="PROSITE" id="PS00164">
    <property type="entry name" value="ENOLASE"/>
    <property type="match status" value="1"/>
</dbReference>
<reference key="1">
    <citation type="journal article" date="1998" name="Science">
        <title>Genome sequence of an obligate intracellular pathogen of humans: Chlamydia trachomatis.</title>
        <authorList>
            <person name="Stephens R.S."/>
            <person name="Kalman S."/>
            <person name="Lammel C.J."/>
            <person name="Fan J."/>
            <person name="Marathe R."/>
            <person name="Aravind L."/>
            <person name="Mitchell W.P."/>
            <person name="Olinger L."/>
            <person name="Tatusov R.L."/>
            <person name="Zhao Q."/>
            <person name="Koonin E.V."/>
            <person name="Davis R.W."/>
        </authorList>
    </citation>
    <scope>NUCLEOTIDE SEQUENCE [LARGE SCALE GENOMIC DNA]</scope>
    <source>
        <strain>ATCC VR-885 / DSM 19411 / UW-3/Cx</strain>
    </source>
</reference>
<evidence type="ECO:0000255" key="1">
    <source>
        <dbReference type="HAMAP-Rule" id="MF_00318"/>
    </source>
</evidence>
<evidence type="ECO:0007829" key="2">
    <source>
        <dbReference type="PDB" id="8W21"/>
    </source>
</evidence>
<name>ENO_CHLTR</name>
<feature type="chain" id="PRO_0000133870" description="Enolase">
    <location>
        <begin position="1"/>
        <end position="424"/>
    </location>
</feature>
<feature type="active site" description="Proton donor" evidence="1">
    <location>
        <position position="207"/>
    </location>
</feature>
<feature type="active site" description="Proton acceptor" evidence="1">
    <location>
        <position position="335"/>
    </location>
</feature>
<feature type="binding site" evidence="1">
    <location>
        <position position="165"/>
    </location>
    <ligand>
        <name>(2R)-2-phosphoglycerate</name>
        <dbReference type="ChEBI" id="CHEBI:58289"/>
    </ligand>
</feature>
<feature type="binding site" evidence="1">
    <location>
        <position position="244"/>
    </location>
    <ligand>
        <name>Mg(2+)</name>
        <dbReference type="ChEBI" id="CHEBI:18420"/>
    </ligand>
</feature>
<feature type="binding site" evidence="1">
    <location>
        <position position="283"/>
    </location>
    <ligand>
        <name>Mg(2+)</name>
        <dbReference type="ChEBI" id="CHEBI:18420"/>
    </ligand>
</feature>
<feature type="binding site" evidence="1">
    <location>
        <position position="310"/>
    </location>
    <ligand>
        <name>Mg(2+)</name>
        <dbReference type="ChEBI" id="CHEBI:18420"/>
    </ligand>
</feature>
<feature type="binding site" evidence="1">
    <location>
        <position position="335"/>
    </location>
    <ligand>
        <name>(2R)-2-phosphoglycerate</name>
        <dbReference type="ChEBI" id="CHEBI:58289"/>
    </ligand>
</feature>
<feature type="binding site" evidence="1">
    <location>
        <position position="364"/>
    </location>
    <ligand>
        <name>(2R)-2-phosphoglycerate</name>
        <dbReference type="ChEBI" id="CHEBI:58289"/>
    </ligand>
</feature>
<feature type="binding site" evidence="1">
    <location>
        <position position="365"/>
    </location>
    <ligand>
        <name>(2R)-2-phosphoglycerate</name>
        <dbReference type="ChEBI" id="CHEBI:58289"/>
    </ligand>
</feature>
<feature type="binding site" evidence="1">
    <location>
        <position position="386"/>
    </location>
    <ligand>
        <name>(2R)-2-phosphoglycerate</name>
        <dbReference type="ChEBI" id="CHEBI:58289"/>
    </ligand>
</feature>
<feature type="strand" evidence="2">
    <location>
        <begin position="5"/>
        <end position="15"/>
    </location>
</feature>
<feature type="strand" evidence="2">
    <location>
        <begin position="21"/>
        <end position="29"/>
    </location>
</feature>
<feature type="strand" evidence="2">
    <location>
        <begin position="34"/>
        <end position="38"/>
    </location>
</feature>
<feature type="strand" evidence="2">
    <location>
        <begin position="44"/>
        <end position="47"/>
    </location>
</feature>
<feature type="helix" evidence="2">
    <location>
        <begin position="61"/>
        <end position="63"/>
    </location>
</feature>
<feature type="helix" evidence="2">
    <location>
        <begin position="67"/>
        <end position="75"/>
    </location>
</feature>
<feature type="helix" evidence="2">
    <location>
        <begin position="77"/>
        <end position="81"/>
    </location>
</feature>
<feature type="helix" evidence="2">
    <location>
        <begin position="89"/>
        <end position="100"/>
    </location>
</feature>
<feature type="turn" evidence="2">
    <location>
        <begin position="106"/>
        <end position="108"/>
    </location>
</feature>
<feature type="helix" evidence="2">
    <location>
        <begin position="110"/>
        <end position="128"/>
    </location>
</feature>
<feature type="helix" evidence="2">
    <location>
        <begin position="132"/>
        <end position="137"/>
    </location>
</feature>
<feature type="strand" evidence="2">
    <location>
        <begin position="149"/>
        <end position="153"/>
    </location>
</feature>
<feature type="helix" evidence="2">
    <location>
        <begin position="155"/>
        <end position="157"/>
    </location>
</feature>
<feature type="strand" evidence="2">
    <location>
        <begin position="159"/>
        <end position="161"/>
    </location>
</feature>
<feature type="strand" evidence="2">
    <location>
        <begin position="164"/>
        <end position="170"/>
    </location>
</feature>
<feature type="helix" evidence="2">
    <location>
        <begin position="177"/>
        <end position="197"/>
    </location>
</feature>
<feature type="helix" evidence="2">
    <location>
        <begin position="217"/>
        <end position="230"/>
    </location>
</feature>
<feature type="turn" evidence="2">
    <location>
        <begin position="236"/>
        <end position="238"/>
    </location>
</feature>
<feature type="strand" evidence="2">
    <location>
        <begin position="239"/>
        <end position="244"/>
    </location>
</feature>
<feature type="helix" evidence="2">
    <location>
        <begin position="247"/>
        <end position="250"/>
    </location>
</feature>
<feature type="turn" evidence="2">
    <location>
        <begin position="253"/>
        <end position="256"/>
    </location>
</feature>
<feature type="helix" evidence="2">
    <location>
        <begin position="263"/>
        <end position="276"/>
    </location>
</feature>
<feature type="strand" evidence="2">
    <location>
        <begin position="279"/>
        <end position="284"/>
    </location>
</feature>
<feature type="helix" evidence="2">
    <location>
        <begin position="291"/>
        <end position="301"/>
    </location>
</feature>
<feature type="turn" evidence="2">
    <location>
        <begin position="302"/>
        <end position="304"/>
    </location>
</feature>
<feature type="strand" evidence="2">
    <location>
        <begin position="305"/>
        <end position="310"/>
    </location>
</feature>
<feature type="turn" evidence="2">
    <location>
        <begin position="311"/>
        <end position="315"/>
    </location>
</feature>
<feature type="helix" evidence="2">
    <location>
        <begin position="317"/>
        <end position="325"/>
    </location>
</feature>
<feature type="strand" evidence="2">
    <location>
        <begin position="330"/>
        <end position="334"/>
    </location>
</feature>
<feature type="helix" evidence="2">
    <location>
        <begin position="336"/>
        <end position="339"/>
    </location>
</feature>
<feature type="helix" evidence="2">
    <location>
        <begin position="342"/>
        <end position="354"/>
    </location>
</feature>
<feature type="strand" evidence="2">
    <location>
        <begin position="358"/>
        <end position="362"/>
    </location>
</feature>
<feature type="helix" evidence="2">
    <location>
        <begin position="372"/>
        <end position="379"/>
    </location>
</feature>
<feature type="strand" evidence="2">
    <location>
        <begin position="383"/>
        <end position="386"/>
    </location>
</feature>
<feature type="strand" evidence="2">
    <location>
        <begin position="390"/>
        <end position="392"/>
    </location>
</feature>
<feature type="helix" evidence="2">
    <location>
        <begin position="393"/>
        <end position="408"/>
    </location>
</feature>
<feature type="helix" evidence="2">
    <location>
        <begin position="410"/>
        <end position="412"/>
    </location>
</feature>
<sequence length="424" mass="45439">MFDVVISDIEAREILDSRGYPTLCVKVITNTGTFGEACVPSGASTGIKEALELRDKDPKRYQGKGVLQAISNVEKVLMPALQGFSVFDQITADAIMIDADGTPNKEKLGANAILGVSLALAKAAANTLQRPLYRYLGGSFSHVLPCPMMNLINGGMHATNGLQFQEFMIRPISAPSLTEAVRMGAEVFNALKKILQNRQLATGVGDEGGFAPNLASNAEALDLLLTAIETAGFTPREDISLALDCAASSFYNTQDKTYDGKSYADQVGILAELCEHYPIDSIEDGLAEEDFEGWKLLSETLGDRVQLVGDDLFVTNSALIAEGIAQGLANAVLIKPNQIGTLTETAEAIRLATIQGYATILSHRSGETEDTTIADLAVAFNTGQIKTGSLSRSERIAKYNRLMAIEEEMGPEALFQDSNPFSKA</sequence>
<organism>
    <name type="scientific">Chlamydia trachomatis serovar D (strain ATCC VR-885 / DSM 19411 / UW-3/Cx)</name>
    <dbReference type="NCBI Taxonomy" id="272561"/>
    <lineage>
        <taxon>Bacteria</taxon>
        <taxon>Pseudomonadati</taxon>
        <taxon>Chlamydiota</taxon>
        <taxon>Chlamydiia</taxon>
        <taxon>Chlamydiales</taxon>
        <taxon>Chlamydiaceae</taxon>
        <taxon>Chlamydia/Chlamydophila group</taxon>
        <taxon>Chlamydia</taxon>
    </lineage>
</organism>